<sequence>MPHHYILTLFGLLPVATNISTWWNFGSMLLTCLMLQVLTGFFLAVHYTANINLAFSSIIHITRDVPYGWLMQNLHAIGASMFFICIYIHIARGLYYGSHLNKETWMSGITLLITLIATAFFGYVLPGGQMSFRAATGITNLLTAVPYLGATMTTWLWGGFAINDPTLTRFFALHFILPFAIISLSSLHIILLHEEGSSNPLGTNPDIDKIPFHPYHSYKDLLLLTLMLLTLMITVSFFPDIFNDPDNFSKANPLVTPQHIKPEWYFLFAYGILRSIPNKLGGALALVMSIMILLTAPLTHTAHLRPMTFRPLSQLMFWTLISTFITITWAATKPVEPPYIIISQTTATLYFTFFISTPILGWIENKMMNSC</sequence>
<proteinExistence type="inferred from homology"/>
<organism>
    <name type="scientific">Python regius</name>
    <name type="common">Ball python</name>
    <name type="synonym">Boa regia</name>
    <dbReference type="NCBI Taxonomy" id="51751"/>
    <lineage>
        <taxon>Eukaryota</taxon>
        <taxon>Metazoa</taxon>
        <taxon>Chordata</taxon>
        <taxon>Craniata</taxon>
        <taxon>Vertebrata</taxon>
        <taxon>Euteleostomi</taxon>
        <taxon>Lepidosauria</taxon>
        <taxon>Squamata</taxon>
        <taxon>Bifurcata</taxon>
        <taxon>Unidentata</taxon>
        <taxon>Episquamata</taxon>
        <taxon>Toxicofera</taxon>
        <taxon>Serpentes</taxon>
        <taxon>Henophidia</taxon>
        <taxon>Pythonidae</taxon>
        <taxon>Python</taxon>
    </lineage>
</organism>
<comment type="function">
    <text evidence="2">Component of the ubiquinol-cytochrome c reductase complex (complex III or cytochrome b-c1 complex) that is part of the mitochondrial respiratory chain. The b-c1 complex mediates electron transfer from ubiquinol to cytochrome c. Contributes to the generation of a proton gradient across the mitochondrial membrane that is then used for ATP synthesis.</text>
</comment>
<comment type="cofactor">
    <cofactor evidence="2">
        <name>heme b</name>
        <dbReference type="ChEBI" id="CHEBI:60344"/>
    </cofactor>
    <text evidence="2">Binds 2 heme b groups non-covalently.</text>
</comment>
<comment type="subunit">
    <text evidence="2">The cytochrome bc1 complex contains 3 respiratory subunits (MT-CYB, CYC1 and UQCRFS1), 2 core proteins (UQCRC1 and UQCRC2) and probably 6 low-molecular weight proteins.</text>
</comment>
<comment type="subcellular location">
    <subcellularLocation>
        <location evidence="2">Mitochondrion inner membrane</location>
        <topology evidence="2">Multi-pass membrane protein</topology>
    </subcellularLocation>
</comment>
<comment type="miscellaneous">
    <text evidence="1">Heme 1 (or BL or b562) is low-potential and absorbs at about 562 nm, and heme 2 (or BH or b566) is high-potential and absorbs at about 566 nm.</text>
</comment>
<comment type="similarity">
    <text evidence="3 4">Belongs to the cytochrome b family.</text>
</comment>
<comment type="caution">
    <text evidence="2">The full-length protein contains only eight transmembrane helices, not nine as predicted by bioinformatics tools.</text>
</comment>
<evidence type="ECO:0000250" key="1"/>
<evidence type="ECO:0000250" key="2">
    <source>
        <dbReference type="UniProtKB" id="P00157"/>
    </source>
</evidence>
<evidence type="ECO:0000255" key="3">
    <source>
        <dbReference type="PROSITE-ProRule" id="PRU00967"/>
    </source>
</evidence>
<evidence type="ECO:0000255" key="4">
    <source>
        <dbReference type="PROSITE-ProRule" id="PRU00968"/>
    </source>
</evidence>
<feature type="chain" id="PRO_0000061477" description="Cytochrome b">
    <location>
        <begin position="1"/>
        <end position="371"/>
    </location>
</feature>
<feature type="transmembrane region" description="Helical" evidence="2">
    <location>
        <begin position="25"/>
        <end position="45"/>
    </location>
</feature>
<feature type="transmembrane region" description="Helical" evidence="2">
    <location>
        <begin position="69"/>
        <end position="90"/>
    </location>
</feature>
<feature type="transmembrane region" description="Helical" evidence="2">
    <location>
        <begin position="105"/>
        <end position="125"/>
    </location>
</feature>
<feature type="transmembrane region" description="Helical" evidence="2">
    <location>
        <begin position="170"/>
        <end position="190"/>
    </location>
</feature>
<feature type="transmembrane region" description="Helical" evidence="2">
    <location>
        <begin position="218"/>
        <end position="238"/>
    </location>
</feature>
<feature type="transmembrane region" description="Helical" evidence="2">
    <location>
        <begin position="280"/>
        <end position="300"/>
    </location>
</feature>
<feature type="transmembrane region" description="Helical" evidence="2">
    <location>
        <begin position="312"/>
        <end position="332"/>
    </location>
</feature>
<feature type="transmembrane region" description="Helical" evidence="2">
    <location>
        <begin position="339"/>
        <end position="358"/>
    </location>
</feature>
<feature type="binding site" description="axial binding residue" evidence="2">
    <location>
        <position position="75"/>
    </location>
    <ligand>
        <name>heme b</name>
        <dbReference type="ChEBI" id="CHEBI:60344"/>
        <label>b562</label>
    </ligand>
    <ligandPart>
        <name>Fe</name>
        <dbReference type="ChEBI" id="CHEBI:18248"/>
    </ligandPart>
</feature>
<feature type="binding site" description="axial binding residue" evidence="2">
    <location>
        <position position="89"/>
    </location>
    <ligand>
        <name>heme b</name>
        <dbReference type="ChEBI" id="CHEBI:60344"/>
        <label>b566</label>
    </ligand>
    <ligandPart>
        <name>Fe</name>
        <dbReference type="ChEBI" id="CHEBI:18248"/>
    </ligandPart>
</feature>
<feature type="binding site" description="axial binding residue" evidence="2">
    <location>
        <position position="174"/>
    </location>
    <ligand>
        <name>heme b</name>
        <dbReference type="ChEBI" id="CHEBI:60344"/>
        <label>b562</label>
    </ligand>
    <ligandPart>
        <name>Fe</name>
        <dbReference type="ChEBI" id="CHEBI:18248"/>
    </ligandPart>
</feature>
<feature type="binding site" description="axial binding residue" evidence="2">
    <location>
        <position position="188"/>
    </location>
    <ligand>
        <name>heme b</name>
        <dbReference type="ChEBI" id="CHEBI:60344"/>
        <label>b566</label>
    </ligand>
    <ligandPart>
        <name>Fe</name>
        <dbReference type="ChEBI" id="CHEBI:18248"/>
    </ligandPart>
</feature>
<feature type="binding site" evidence="2">
    <location>
        <position position="193"/>
    </location>
    <ligand>
        <name>a ubiquinone</name>
        <dbReference type="ChEBI" id="CHEBI:16389"/>
    </ligand>
</feature>
<geneLocation type="mitochondrion"/>
<keyword id="KW-0249">Electron transport</keyword>
<keyword id="KW-0349">Heme</keyword>
<keyword id="KW-0408">Iron</keyword>
<keyword id="KW-0472">Membrane</keyword>
<keyword id="KW-0479">Metal-binding</keyword>
<keyword id="KW-0496">Mitochondrion</keyword>
<keyword id="KW-0999">Mitochondrion inner membrane</keyword>
<keyword id="KW-0679">Respiratory chain</keyword>
<keyword id="KW-0812">Transmembrane</keyword>
<keyword id="KW-1133">Transmembrane helix</keyword>
<keyword id="KW-0813">Transport</keyword>
<keyword id="KW-0830">Ubiquinone</keyword>
<protein>
    <recommendedName>
        <fullName>Cytochrome b</fullName>
    </recommendedName>
    <alternativeName>
        <fullName>Complex III subunit 3</fullName>
    </alternativeName>
    <alternativeName>
        <fullName>Complex III subunit III</fullName>
    </alternativeName>
    <alternativeName>
        <fullName>Cytochrome b-c1 complex subunit 3</fullName>
    </alternativeName>
    <alternativeName>
        <fullName>Ubiquinol-cytochrome-c reductase complex cytochrome b subunit</fullName>
    </alternativeName>
</protein>
<reference key="1">
    <citation type="thesis" date="1997" institute="Queen's University / Kingston" country="Canada">
        <title>Hic Sunt Serpentes -- molecular phylogenetics and the Boidae (Serpentes: Booidea).</title>
        <authorList>
            <person name="Campbell B.N."/>
        </authorList>
    </citation>
    <scope>NUCLEOTIDE SEQUENCE [GENOMIC DNA]</scope>
</reference>
<gene>
    <name type="primary">MT-CYB</name>
    <name type="synonym">COB</name>
    <name type="synonym">CYTB</name>
    <name type="synonym">MTCYB</name>
</gene>
<dbReference type="EMBL" id="U69856">
    <property type="protein sequence ID" value="AAC01890.1"/>
    <property type="molecule type" value="Genomic_DNA"/>
</dbReference>
<dbReference type="SMR" id="O48109"/>
<dbReference type="GO" id="GO:0005743">
    <property type="term" value="C:mitochondrial inner membrane"/>
    <property type="evidence" value="ECO:0007669"/>
    <property type="project" value="UniProtKB-SubCell"/>
</dbReference>
<dbReference type="GO" id="GO:0045275">
    <property type="term" value="C:respiratory chain complex III"/>
    <property type="evidence" value="ECO:0007669"/>
    <property type="project" value="InterPro"/>
</dbReference>
<dbReference type="GO" id="GO:0046872">
    <property type="term" value="F:metal ion binding"/>
    <property type="evidence" value="ECO:0007669"/>
    <property type="project" value="UniProtKB-KW"/>
</dbReference>
<dbReference type="GO" id="GO:0008121">
    <property type="term" value="F:ubiquinol-cytochrome-c reductase activity"/>
    <property type="evidence" value="ECO:0007669"/>
    <property type="project" value="InterPro"/>
</dbReference>
<dbReference type="GO" id="GO:0006122">
    <property type="term" value="P:mitochondrial electron transport, ubiquinol to cytochrome c"/>
    <property type="evidence" value="ECO:0007669"/>
    <property type="project" value="TreeGrafter"/>
</dbReference>
<dbReference type="CDD" id="cd00290">
    <property type="entry name" value="cytochrome_b_C"/>
    <property type="match status" value="1"/>
</dbReference>
<dbReference type="CDD" id="cd00284">
    <property type="entry name" value="Cytochrome_b_N"/>
    <property type="match status" value="1"/>
</dbReference>
<dbReference type="Gene3D" id="1.20.810.10">
    <property type="entry name" value="Cytochrome Bc1 Complex, Chain C"/>
    <property type="match status" value="1"/>
</dbReference>
<dbReference type="InterPro" id="IPR005798">
    <property type="entry name" value="Cyt_b/b6_C"/>
</dbReference>
<dbReference type="InterPro" id="IPR036150">
    <property type="entry name" value="Cyt_b/b6_C_sf"/>
</dbReference>
<dbReference type="InterPro" id="IPR005797">
    <property type="entry name" value="Cyt_b/b6_N"/>
</dbReference>
<dbReference type="InterPro" id="IPR027387">
    <property type="entry name" value="Cytb/b6-like_sf"/>
</dbReference>
<dbReference type="InterPro" id="IPR030689">
    <property type="entry name" value="Cytochrome_b"/>
</dbReference>
<dbReference type="InterPro" id="IPR048260">
    <property type="entry name" value="Cytochrome_b_C_euk/bac"/>
</dbReference>
<dbReference type="InterPro" id="IPR048259">
    <property type="entry name" value="Cytochrome_b_N_euk/bac"/>
</dbReference>
<dbReference type="InterPro" id="IPR016174">
    <property type="entry name" value="Di-haem_cyt_TM"/>
</dbReference>
<dbReference type="PANTHER" id="PTHR19271">
    <property type="entry name" value="CYTOCHROME B"/>
    <property type="match status" value="1"/>
</dbReference>
<dbReference type="PANTHER" id="PTHR19271:SF16">
    <property type="entry name" value="CYTOCHROME B"/>
    <property type="match status" value="1"/>
</dbReference>
<dbReference type="Pfam" id="PF00032">
    <property type="entry name" value="Cytochrom_B_C"/>
    <property type="match status" value="1"/>
</dbReference>
<dbReference type="Pfam" id="PF00033">
    <property type="entry name" value="Cytochrome_B"/>
    <property type="match status" value="1"/>
</dbReference>
<dbReference type="PIRSF" id="PIRSF038885">
    <property type="entry name" value="COB"/>
    <property type="match status" value="1"/>
</dbReference>
<dbReference type="SUPFAM" id="SSF81648">
    <property type="entry name" value="a domain/subunit of cytochrome bc1 complex (Ubiquinol-cytochrome c reductase)"/>
    <property type="match status" value="1"/>
</dbReference>
<dbReference type="SUPFAM" id="SSF81342">
    <property type="entry name" value="Transmembrane di-heme cytochromes"/>
    <property type="match status" value="1"/>
</dbReference>
<dbReference type="PROSITE" id="PS51003">
    <property type="entry name" value="CYTB_CTER"/>
    <property type="match status" value="1"/>
</dbReference>
<dbReference type="PROSITE" id="PS51002">
    <property type="entry name" value="CYTB_NTER"/>
    <property type="match status" value="1"/>
</dbReference>
<accession>O48109</accession>
<name>CYB_PYTRG</name>